<feature type="chain" id="PRO_0000384570" description="Uncharacterized protein ORF307">
    <location>
        <begin position="1"/>
        <end position="307"/>
    </location>
</feature>
<protein>
    <recommendedName>
        <fullName>Uncharacterized protein ORF307</fullName>
    </recommendedName>
</protein>
<organismHost>
    <name type="scientific">Acidianus hospitalis</name>
    <dbReference type="NCBI Taxonomy" id="563177"/>
</organismHost>
<organismHost>
    <name type="scientific">Acidianus infernus</name>
    <dbReference type="NCBI Taxonomy" id="12915"/>
</organismHost>
<accession>Q70LC0</accession>
<dbReference type="EMBL" id="AJ567472">
    <property type="protein sequence ID" value="CAD98960.1"/>
    <property type="molecule type" value="Genomic_DNA"/>
</dbReference>
<dbReference type="RefSeq" id="YP_003756.1">
    <property type="nucleotide sequence ID" value="NC_005830.1"/>
</dbReference>
<dbReference type="KEGG" id="vg:2769178"/>
<dbReference type="Proteomes" id="UP000000514">
    <property type="component" value="Genome"/>
</dbReference>
<organism>
    <name type="scientific">Acidianus filamentous virus 1 (isolate United States/Yellowstone)</name>
    <name type="common">AFV-1</name>
    <dbReference type="NCBI Taxonomy" id="654909"/>
    <lineage>
        <taxon>Viruses</taxon>
        <taxon>Adnaviria</taxon>
        <taxon>Zilligvirae</taxon>
        <taxon>Taleaviricota</taxon>
        <taxon>Tokiviricetes</taxon>
        <taxon>Ligamenvirales</taxon>
        <taxon>Ungulaviridae</taxon>
        <taxon>Captovirus</taxon>
        <taxon>Acidianus filamentous virus 1</taxon>
    </lineage>
</organism>
<name>Y307_AFV1Y</name>
<reference key="1">
    <citation type="journal article" date="2003" name="Virology">
        <title>AFV1, a novel virus infecting hyperthermophilic archaea of the genus acidianus.</title>
        <authorList>
            <person name="Bettstetter M."/>
            <person name="Peng X."/>
            <person name="Garrett R.A."/>
            <person name="Prangishvili D."/>
        </authorList>
    </citation>
    <scope>NUCLEOTIDE SEQUENCE [GENOMIC DNA]</scope>
</reference>
<sequence length="307" mass="34209">MTRRYRSNPAVIPVPFPVPLPITEQTTPQIPPPSPTAIQFTCFGIPIYQSPSVPKSYAVVNVVSHNVFYGCSGDTCFEGVEGVDIRSFVFLPINLFAYIFACEAPLETQETQGTQTIIVITESKPLYNTDKVTQVNQIVQGQFTDKSEVLSINYGDVNVTDINYLSFIQTGLQIATKFTLPLCDRISIFKTPFELAVAKTLYLEIVGKERPELTAILDFMQSLDAEISGIIETDYQEIEPNGKLTDVISKPIQNQLPLQILPGLILGESYQFNTNNILMQTEIETEIGEQLYTDGITFETELTVKQS</sequence>
<proteinExistence type="predicted"/>
<keyword id="KW-1185">Reference proteome</keyword>
<gene>
    <name type="ORF">ORF307</name>
</gene>